<name>BNP_CROAT</name>
<evidence type="ECO:0000250" key="1">
    <source>
        <dbReference type="UniProtKB" id="P0C7P5"/>
    </source>
</evidence>
<evidence type="ECO:0000250" key="2">
    <source>
        <dbReference type="UniProtKB" id="P0DMD6"/>
    </source>
</evidence>
<evidence type="ECO:0000269" key="3">
    <source>
    </source>
</evidence>
<evidence type="ECO:0000303" key="4">
    <source>
    </source>
</evidence>
<evidence type="ECO:0000305" key="5"/>
<evidence type="ECO:0000305" key="6">
    <source>
    </source>
</evidence>
<reference key="1">
    <citation type="journal article" date="2009" name="J. Proteome Res.">
        <title>Exploring the venom proteome of the western diamondback rattlesnake, Crotalus atrox, via snake venomics and combinatorial peptide ligand library approaches.</title>
        <authorList>
            <person name="Calvete J.J."/>
            <person name="Fasoli E."/>
            <person name="Sanz L."/>
            <person name="Boschetti E."/>
            <person name="Righetti P.G."/>
        </authorList>
    </citation>
    <scope>PROTEIN SEQUENCE</scope>
    <scope>MASS SPECTROMETRY</scope>
    <scope>SUBCELLULAR LOCATION</scope>
    <source>
        <tissue>Venom</tissue>
    </source>
</reference>
<sequence length="25" mass="2540">AKKRAGNGCFGLKLDRIGSMSGLGC</sequence>
<comment type="function">
    <text evidence="1">Snake venom natriuretic peptide that has a vasorelaxant activity in rat aortic strips and a diuretic potency in anesthetized rats (By similarity). May act by activating natriuretic receptors (NPR1 and/or NPR2).</text>
</comment>
<comment type="subcellular location">
    <subcellularLocation>
        <location evidence="3">Secreted</location>
    </subcellularLocation>
</comment>
<comment type="tissue specificity">
    <text evidence="6">Venom gland.</text>
</comment>
<comment type="mass spectrometry" mass="2537.6" method="Unknown" evidence="3"/>
<comment type="similarity">
    <text evidence="5">In the C-terminal section; belongs to the natriuretic peptide family.</text>
</comment>
<accession>P0CV87</accession>
<dbReference type="GO" id="GO:0005576">
    <property type="term" value="C:extracellular region"/>
    <property type="evidence" value="ECO:0007669"/>
    <property type="project" value="UniProtKB-SubCell"/>
</dbReference>
<dbReference type="GO" id="GO:0005179">
    <property type="term" value="F:hormone activity"/>
    <property type="evidence" value="ECO:0007669"/>
    <property type="project" value="InterPro"/>
</dbReference>
<dbReference type="GO" id="GO:0090729">
    <property type="term" value="F:toxin activity"/>
    <property type="evidence" value="ECO:0007669"/>
    <property type="project" value="UniProtKB-KW"/>
</dbReference>
<dbReference type="GO" id="GO:0008217">
    <property type="term" value="P:regulation of blood pressure"/>
    <property type="evidence" value="ECO:0007669"/>
    <property type="project" value="UniProtKB-KW"/>
</dbReference>
<dbReference type="GO" id="GO:0042311">
    <property type="term" value="P:vasodilation"/>
    <property type="evidence" value="ECO:0007669"/>
    <property type="project" value="UniProtKB-KW"/>
</dbReference>
<dbReference type="InterPro" id="IPR000663">
    <property type="entry name" value="Natr_peptide"/>
</dbReference>
<dbReference type="InterPro" id="IPR030480">
    <property type="entry name" value="Natr_peptide_CS"/>
</dbReference>
<dbReference type="InterPro" id="IPR002408">
    <property type="entry name" value="Natriuretic_peptide_brain"/>
</dbReference>
<dbReference type="Pfam" id="PF00212">
    <property type="entry name" value="ANP"/>
    <property type="match status" value="1"/>
</dbReference>
<dbReference type="PRINTS" id="PR00712">
    <property type="entry name" value="BNATPEPTIDE"/>
</dbReference>
<dbReference type="PRINTS" id="PR00710">
    <property type="entry name" value="NATPEPTIDES"/>
</dbReference>
<dbReference type="SMART" id="SM00183">
    <property type="entry name" value="NAT_PEP"/>
    <property type="match status" value="1"/>
</dbReference>
<dbReference type="PROSITE" id="PS00263">
    <property type="entry name" value="NATRIURETIC_PEPTIDE"/>
    <property type="match status" value="1"/>
</dbReference>
<proteinExistence type="evidence at protein level"/>
<feature type="peptide" id="PRO_0000407584" description="C-type natriuretic peptide" evidence="3">
    <location>
        <begin position="1"/>
        <end position="25"/>
    </location>
</feature>
<feature type="disulfide bond" evidence="2">
    <location>
        <begin position="9"/>
        <end position="25"/>
    </location>
</feature>
<organism>
    <name type="scientific">Crotalus atrox</name>
    <name type="common">Western diamondback rattlesnake</name>
    <dbReference type="NCBI Taxonomy" id="8730"/>
    <lineage>
        <taxon>Eukaryota</taxon>
        <taxon>Metazoa</taxon>
        <taxon>Chordata</taxon>
        <taxon>Craniata</taxon>
        <taxon>Vertebrata</taxon>
        <taxon>Euteleostomi</taxon>
        <taxon>Lepidosauria</taxon>
        <taxon>Squamata</taxon>
        <taxon>Bifurcata</taxon>
        <taxon>Unidentata</taxon>
        <taxon>Episquamata</taxon>
        <taxon>Toxicofera</taxon>
        <taxon>Serpentes</taxon>
        <taxon>Colubroidea</taxon>
        <taxon>Viperidae</taxon>
        <taxon>Crotalinae</taxon>
        <taxon>Crotalus</taxon>
    </lineage>
</organism>
<protein>
    <recommendedName>
        <fullName evidence="4">C-type natriuretic peptide</fullName>
        <shortName>CNP</shortName>
        <shortName evidence="4">NAP</shortName>
    </recommendedName>
</protein>
<keyword id="KW-0903">Direct protein sequencing</keyword>
<keyword id="KW-1015">Disulfide bond</keyword>
<keyword id="KW-0382">Hypotensive agent</keyword>
<keyword id="KW-0964">Secreted</keyword>
<keyword id="KW-0800">Toxin</keyword>
<keyword id="KW-0838">Vasoactive</keyword>
<keyword id="KW-0840">Vasodilator</keyword>